<protein>
    <recommendedName>
        <fullName evidence="1">tRNA-2-methylthio-N(6)-dimethylallyladenosine synthase</fullName>
        <ecNumber evidence="1">2.8.4.3</ecNumber>
    </recommendedName>
    <alternativeName>
        <fullName evidence="1">(Dimethylallyl)adenosine tRNA methylthiotransferase MiaB</fullName>
    </alternativeName>
    <alternativeName>
        <fullName evidence="1">tRNA-i(6)A37 methylthiotransferase</fullName>
    </alternativeName>
</protein>
<accession>B7IFC4</accession>
<proteinExistence type="inferred from homology"/>
<dbReference type="EC" id="2.8.4.3" evidence="1"/>
<dbReference type="EMBL" id="CP001185">
    <property type="protein sequence ID" value="ACJ74788.1"/>
    <property type="molecule type" value="Genomic_DNA"/>
</dbReference>
<dbReference type="RefSeq" id="WP_012579472.1">
    <property type="nucleotide sequence ID" value="NC_011653.1"/>
</dbReference>
<dbReference type="SMR" id="B7IFC4"/>
<dbReference type="STRING" id="484019.THA_288"/>
<dbReference type="KEGG" id="taf:THA_288"/>
<dbReference type="eggNOG" id="COG0621">
    <property type="taxonomic scope" value="Bacteria"/>
</dbReference>
<dbReference type="HOGENOM" id="CLU_018697_2_0_0"/>
<dbReference type="OrthoDB" id="9805215at2"/>
<dbReference type="Proteomes" id="UP000002453">
    <property type="component" value="Chromosome"/>
</dbReference>
<dbReference type="GO" id="GO:0005829">
    <property type="term" value="C:cytosol"/>
    <property type="evidence" value="ECO:0007669"/>
    <property type="project" value="TreeGrafter"/>
</dbReference>
<dbReference type="GO" id="GO:0051539">
    <property type="term" value="F:4 iron, 4 sulfur cluster binding"/>
    <property type="evidence" value="ECO:0007669"/>
    <property type="project" value="UniProtKB-UniRule"/>
</dbReference>
<dbReference type="GO" id="GO:0046872">
    <property type="term" value="F:metal ion binding"/>
    <property type="evidence" value="ECO:0007669"/>
    <property type="project" value="UniProtKB-KW"/>
</dbReference>
<dbReference type="GO" id="GO:0035597">
    <property type="term" value="F:N6-isopentenyladenosine methylthiotransferase activity"/>
    <property type="evidence" value="ECO:0007669"/>
    <property type="project" value="TreeGrafter"/>
</dbReference>
<dbReference type="CDD" id="cd01335">
    <property type="entry name" value="Radical_SAM"/>
    <property type="match status" value="1"/>
</dbReference>
<dbReference type="FunFam" id="3.40.50.12160:FF:000003">
    <property type="entry name" value="CDK5 regulatory subunit-associated protein 1"/>
    <property type="match status" value="1"/>
</dbReference>
<dbReference type="FunFam" id="3.80.30.20:FF:000001">
    <property type="entry name" value="tRNA-2-methylthio-N(6)-dimethylallyladenosine synthase 2"/>
    <property type="match status" value="1"/>
</dbReference>
<dbReference type="Gene3D" id="3.40.50.12160">
    <property type="entry name" value="Methylthiotransferase, N-terminal domain"/>
    <property type="match status" value="1"/>
</dbReference>
<dbReference type="Gene3D" id="3.80.30.20">
    <property type="entry name" value="tm_1862 like domain"/>
    <property type="match status" value="1"/>
</dbReference>
<dbReference type="HAMAP" id="MF_01864">
    <property type="entry name" value="tRNA_metthiotr_MiaB"/>
    <property type="match status" value="1"/>
</dbReference>
<dbReference type="InterPro" id="IPR006638">
    <property type="entry name" value="Elp3/MiaA/NifB-like_rSAM"/>
</dbReference>
<dbReference type="InterPro" id="IPR005839">
    <property type="entry name" value="Methylthiotransferase"/>
</dbReference>
<dbReference type="InterPro" id="IPR020612">
    <property type="entry name" value="Methylthiotransferase_CS"/>
</dbReference>
<dbReference type="InterPro" id="IPR013848">
    <property type="entry name" value="Methylthiotransferase_N"/>
</dbReference>
<dbReference type="InterPro" id="IPR038135">
    <property type="entry name" value="Methylthiotransferase_N_sf"/>
</dbReference>
<dbReference type="InterPro" id="IPR006463">
    <property type="entry name" value="MiaB_methiolase"/>
</dbReference>
<dbReference type="InterPro" id="IPR007197">
    <property type="entry name" value="rSAM"/>
</dbReference>
<dbReference type="InterPro" id="IPR023404">
    <property type="entry name" value="rSAM_horseshoe"/>
</dbReference>
<dbReference type="InterPro" id="IPR002792">
    <property type="entry name" value="TRAM_dom"/>
</dbReference>
<dbReference type="NCBIfam" id="TIGR01574">
    <property type="entry name" value="miaB-methiolase"/>
    <property type="match status" value="1"/>
</dbReference>
<dbReference type="NCBIfam" id="TIGR00089">
    <property type="entry name" value="MiaB/RimO family radical SAM methylthiotransferase"/>
    <property type="match status" value="1"/>
</dbReference>
<dbReference type="PANTHER" id="PTHR43020">
    <property type="entry name" value="CDK5 REGULATORY SUBUNIT-ASSOCIATED PROTEIN 1"/>
    <property type="match status" value="1"/>
</dbReference>
<dbReference type="PANTHER" id="PTHR43020:SF2">
    <property type="entry name" value="MITOCHONDRIAL TRNA METHYLTHIOTRANSFERASE CDK5RAP1"/>
    <property type="match status" value="1"/>
</dbReference>
<dbReference type="Pfam" id="PF04055">
    <property type="entry name" value="Radical_SAM"/>
    <property type="match status" value="1"/>
</dbReference>
<dbReference type="Pfam" id="PF01938">
    <property type="entry name" value="TRAM"/>
    <property type="match status" value="1"/>
</dbReference>
<dbReference type="Pfam" id="PF00919">
    <property type="entry name" value="UPF0004"/>
    <property type="match status" value="1"/>
</dbReference>
<dbReference type="SFLD" id="SFLDF00273">
    <property type="entry name" value="(dimethylallyl)adenosine_tRNA"/>
    <property type="match status" value="1"/>
</dbReference>
<dbReference type="SFLD" id="SFLDG01082">
    <property type="entry name" value="B12-binding_domain_containing"/>
    <property type="match status" value="1"/>
</dbReference>
<dbReference type="SFLD" id="SFLDG01061">
    <property type="entry name" value="methylthiotransferase"/>
    <property type="match status" value="1"/>
</dbReference>
<dbReference type="SMART" id="SM00729">
    <property type="entry name" value="Elp3"/>
    <property type="match status" value="1"/>
</dbReference>
<dbReference type="SUPFAM" id="SSF102114">
    <property type="entry name" value="Radical SAM enzymes"/>
    <property type="match status" value="1"/>
</dbReference>
<dbReference type="PROSITE" id="PS51449">
    <property type="entry name" value="MTTASE_N"/>
    <property type="match status" value="1"/>
</dbReference>
<dbReference type="PROSITE" id="PS01278">
    <property type="entry name" value="MTTASE_RADICAL"/>
    <property type="match status" value="1"/>
</dbReference>
<dbReference type="PROSITE" id="PS51918">
    <property type="entry name" value="RADICAL_SAM"/>
    <property type="match status" value="1"/>
</dbReference>
<dbReference type="PROSITE" id="PS50926">
    <property type="entry name" value="TRAM"/>
    <property type="match status" value="1"/>
</dbReference>
<name>MIAB_THEAB</name>
<keyword id="KW-0004">4Fe-4S</keyword>
<keyword id="KW-0963">Cytoplasm</keyword>
<keyword id="KW-0408">Iron</keyword>
<keyword id="KW-0411">Iron-sulfur</keyword>
<keyword id="KW-0479">Metal-binding</keyword>
<keyword id="KW-1185">Reference proteome</keyword>
<keyword id="KW-0949">S-adenosyl-L-methionine</keyword>
<keyword id="KW-0808">Transferase</keyword>
<keyword id="KW-0819">tRNA processing</keyword>
<reference key="1">
    <citation type="journal article" date="2009" name="J. Bacteriol.">
        <title>The genome of Thermosipho africanus TCF52B: lateral genetic connections to the Firmicutes and Archaea.</title>
        <authorList>
            <person name="Nesboe C.L."/>
            <person name="Bapteste E."/>
            <person name="Curtis B."/>
            <person name="Dahle H."/>
            <person name="Lopez P."/>
            <person name="Macleod D."/>
            <person name="Dlutek M."/>
            <person name="Bowman S."/>
            <person name="Zhaxybayeva O."/>
            <person name="Birkeland N.-K."/>
            <person name="Doolittle W.F."/>
        </authorList>
    </citation>
    <scope>NUCLEOTIDE SEQUENCE [LARGE SCALE GENOMIC DNA]</scope>
    <source>
        <strain>TCF52B</strain>
    </source>
</reference>
<comment type="function">
    <text evidence="1">Catalyzes the methylthiolation of N6-(dimethylallyl)adenosine (i(6)A), leading to the formation of 2-methylthio-N6-(dimethylallyl)adenosine (ms(2)i(6)A) at position 37 in tRNAs that read codons beginning with uridine.</text>
</comment>
<comment type="catalytic activity">
    <reaction evidence="1">
        <text>N(6)-dimethylallyladenosine(37) in tRNA + (sulfur carrier)-SH + AH2 + 2 S-adenosyl-L-methionine = 2-methylsulfanyl-N(6)-dimethylallyladenosine(37) in tRNA + (sulfur carrier)-H + 5'-deoxyadenosine + L-methionine + A + S-adenosyl-L-homocysteine + 2 H(+)</text>
        <dbReference type="Rhea" id="RHEA:37067"/>
        <dbReference type="Rhea" id="RHEA-COMP:10375"/>
        <dbReference type="Rhea" id="RHEA-COMP:10376"/>
        <dbReference type="Rhea" id="RHEA-COMP:14737"/>
        <dbReference type="Rhea" id="RHEA-COMP:14739"/>
        <dbReference type="ChEBI" id="CHEBI:13193"/>
        <dbReference type="ChEBI" id="CHEBI:15378"/>
        <dbReference type="ChEBI" id="CHEBI:17319"/>
        <dbReference type="ChEBI" id="CHEBI:17499"/>
        <dbReference type="ChEBI" id="CHEBI:29917"/>
        <dbReference type="ChEBI" id="CHEBI:57844"/>
        <dbReference type="ChEBI" id="CHEBI:57856"/>
        <dbReference type="ChEBI" id="CHEBI:59789"/>
        <dbReference type="ChEBI" id="CHEBI:64428"/>
        <dbReference type="ChEBI" id="CHEBI:74415"/>
        <dbReference type="ChEBI" id="CHEBI:74417"/>
        <dbReference type="EC" id="2.8.4.3"/>
    </reaction>
</comment>
<comment type="cofactor">
    <cofactor evidence="1">
        <name>[4Fe-4S] cluster</name>
        <dbReference type="ChEBI" id="CHEBI:49883"/>
    </cofactor>
    <text evidence="1">Binds 2 [4Fe-4S] clusters. One cluster is coordinated with 3 cysteines and an exchangeable S-adenosyl-L-methionine.</text>
</comment>
<comment type="subunit">
    <text evidence="1">Monomer.</text>
</comment>
<comment type="subcellular location">
    <subcellularLocation>
        <location evidence="1">Cytoplasm</location>
    </subcellularLocation>
</comment>
<comment type="similarity">
    <text evidence="1">Belongs to the methylthiotransferase family. MiaB subfamily.</text>
</comment>
<evidence type="ECO:0000255" key="1">
    <source>
        <dbReference type="HAMAP-Rule" id="MF_01864"/>
    </source>
</evidence>
<evidence type="ECO:0000255" key="2">
    <source>
        <dbReference type="PROSITE-ProRule" id="PRU01266"/>
    </source>
</evidence>
<sequence>MKFFIKTYGCQMNENDSEVARYYLEQEGYESAENENEADIVILNTCVVRKKAEDKFLSTIGELRKKNKKIGVMGCGAEKLKEDLFKRGVNFVIGTRAISRIPEAVELSIKGKKAAIFDDKLDEIDYRNILKRNSKHHAWITIIYGCNRFCTYCIVPYTRGREKSRKMDDILREVKNLSLNGVREITYLGQNVDAYGKDLNDGTSLAKLLNETKKIENIERIWFLTSYPTDFSLDIAREIASSEKIAKSIHLPVQHGSNKILKKMNRRYTIEEYYELIKSIREIVPDASISSDIIVGFPDETEDDFQQTVKLVEEIKFERLNLAIYSPREGTIAWKYFEDNVPRAIKTRRMAYLLNLQKEINKMLNESYLDKTVEVIVEERAKSGLFYGRDIRNKIIAFEGDESLIGKKILVKIKKTTAGPLYGDIIKII</sequence>
<gene>
    <name evidence="1" type="primary">miaB</name>
    <name type="ordered locus">THA_288</name>
</gene>
<organism>
    <name type="scientific">Thermosipho africanus (strain TCF52B)</name>
    <dbReference type="NCBI Taxonomy" id="484019"/>
    <lineage>
        <taxon>Bacteria</taxon>
        <taxon>Thermotogati</taxon>
        <taxon>Thermotogota</taxon>
        <taxon>Thermotogae</taxon>
        <taxon>Thermotogales</taxon>
        <taxon>Fervidobacteriaceae</taxon>
        <taxon>Thermosipho</taxon>
    </lineage>
</organism>
<feature type="chain" id="PRO_0000374611" description="tRNA-2-methylthio-N(6)-dimethylallyladenosine synthase">
    <location>
        <begin position="1"/>
        <end position="429"/>
    </location>
</feature>
<feature type="domain" description="MTTase N-terminal" evidence="1">
    <location>
        <begin position="1"/>
        <end position="110"/>
    </location>
</feature>
<feature type="domain" description="Radical SAM core" evidence="2">
    <location>
        <begin position="132"/>
        <end position="364"/>
    </location>
</feature>
<feature type="domain" description="TRAM" evidence="1">
    <location>
        <begin position="366"/>
        <end position="427"/>
    </location>
</feature>
<feature type="binding site" evidence="1">
    <location>
        <position position="10"/>
    </location>
    <ligand>
        <name>[4Fe-4S] cluster</name>
        <dbReference type="ChEBI" id="CHEBI:49883"/>
        <label>1</label>
    </ligand>
</feature>
<feature type="binding site" evidence="1">
    <location>
        <position position="46"/>
    </location>
    <ligand>
        <name>[4Fe-4S] cluster</name>
        <dbReference type="ChEBI" id="CHEBI:49883"/>
        <label>1</label>
    </ligand>
</feature>
<feature type="binding site" evidence="1">
    <location>
        <position position="75"/>
    </location>
    <ligand>
        <name>[4Fe-4S] cluster</name>
        <dbReference type="ChEBI" id="CHEBI:49883"/>
        <label>1</label>
    </ligand>
</feature>
<feature type="binding site" evidence="1">
    <location>
        <position position="146"/>
    </location>
    <ligand>
        <name>[4Fe-4S] cluster</name>
        <dbReference type="ChEBI" id="CHEBI:49883"/>
        <label>2</label>
        <note>4Fe-4S-S-AdoMet</note>
    </ligand>
</feature>
<feature type="binding site" evidence="1">
    <location>
        <position position="150"/>
    </location>
    <ligand>
        <name>[4Fe-4S] cluster</name>
        <dbReference type="ChEBI" id="CHEBI:49883"/>
        <label>2</label>
        <note>4Fe-4S-S-AdoMet</note>
    </ligand>
</feature>
<feature type="binding site" evidence="1">
    <location>
        <position position="153"/>
    </location>
    <ligand>
        <name>[4Fe-4S] cluster</name>
        <dbReference type="ChEBI" id="CHEBI:49883"/>
        <label>2</label>
        <note>4Fe-4S-S-AdoMet</note>
    </ligand>
</feature>